<comment type="function">
    <text evidence="1">Plays a role in nuclear translocation of the viral pre-integration complex (PIC), thus is required for the virus to infect non-dividing cells. Targets specific host proteins for degradation by the 26S proteasome. Acts by associating with the cellular CUL4A-DDB1 E3 ligase complex through direct interaction with host VPRPB/DCAF-1. This change in the E3 ligase substrate specificity results in the degradation of host SAMHD1. In turn, SAMHD1 depletion allows viral replication in host myeloid cells by preventing SAMHD1-mediated hydrolysis of intracellular dNTPs necessary for reverse transcription (By similarity).</text>
</comment>
<comment type="subunit">
    <text evidence="1">Interacts with the P6 region of unprocessed GAG. Interacts with host VPRBP/DCAF1, leading to change substrate specificity of the CUL4A-DDB1 E3 ligase complex (By similarity).</text>
</comment>
<comment type="subcellular location">
    <subcellularLocation>
        <location>Virion</location>
    </subcellularLocation>
    <subcellularLocation>
        <location>Host nucleus</location>
    </subcellularLocation>
    <text evidence="1">Nuclear just after virion uncoating, or if expressed in the absence of unprocessed GAG.</text>
</comment>
<comment type="miscellaneous">
    <text>This is an African green monkey isolate.</text>
</comment>
<comment type="similarity">
    <text evidence="3">Belongs to the lentivirus VPX protein family.</text>
</comment>
<name>VPX_SIVG1</name>
<feature type="chain" id="PRO_0000085401" description="Protein Vpx">
    <location>
        <begin position="1"/>
        <end position="118"/>
    </location>
</feature>
<feature type="region of interest" description="Disordered" evidence="2">
    <location>
        <begin position="98"/>
        <end position="118"/>
    </location>
</feature>
<gene>
    <name type="primary">vpx</name>
</gene>
<reference key="1">
    <citation type="journal article" date="1991" name="Virology">
        <title>A highly divergent proviral DNA clone of SIV from a distinct species of African green monkey.</title>
        <authorList>
            <person name="Fomsgaard A."/>
            <person name="Hirsch V.M."/>
            <person name="Allan J.S."/>
            <person name="Johnson P.R."/>
        </authorList>
    </citation>
    <scope>NUCLEOTIDE SEQUENCE [GENOMIC DNA]</scope>
</reference>
<evidence type="ECO:0000250" key="1"/>
<evidence type="ECO:0000256" key="2">
    <source>
        <dbReference type="SAM" id="MobiDB-lite"/>
    </source>
</evidence>
<evidence type="ECO:0000305" key="3"/>
<organismHost>
    <name type="scientific">Cercopithecidae</name>
    <name type="common">Old World monkeys</name>
    <dbReference type="NCBI Taxonomy" id="9527"/>
</organismHost>
<protein>
    <recommendedName>
        <fullName>Protein Vpx</fullName>
    </recommendedName>
    <alternativeName>
        <fullName>Viral protein X</fullName>
    </alternativeName>
    <alternativeName>
        <fullName>X ORF protein</fullName>
    </alternativeName>
</protein>
<dbReference type="EMBL" id="M66437">
    <property type="protein sequence ID" value="AAA91925.1"/>
    <property type="molecule type" value="Genomic_DNA"/>
</dbReference>
<dbReference type="EMBL" id="M58410">
    <property type="protein sequence ID" value="AAA47590.1"/>
    <property type="molecule type" value="Genomic_RNA"/>
</dbReference>
<dbReference type="RefSeq" id="NP_054371.1">
    <property type="nucleotide sequence ID" value="NC_001549.1"/>
</dbReference>
<dbReference type="SMR" id="Q02842"/>
<dbReference type="BioGRID" id="3509203">
    <property type="interactions" value="7"/>
</dbReference>
<dbReference type="GeneID" id="1490006"/>
<dbReference type="KEGG" id="vg:1490006"/>
<dbReference type="Proteomes" id="UP000201112">
    <property type="component" value="Segment"/>
</dbReference>
<dbReference type="Proteomes" id="UP000257419">
    <property type="component" value="Segment"/>
</dbReference>
<dbReference type="GO" id="GO:0042025">
    <property type="term" value="C:host cell nucleus"/>
    <property type="evidence" value="ECO:0007669"/>
    <property type="project" value="UniProtKB-SubCell"/>
</dbReference>
<dbReference type="GO" id="GO:0044423">
    <property type="term" value="C:virion component"/>
    <property type="evidence" value="ECO:0007669"/>
    <property type="project" value="UniProtKB-KW"/>
</dbReference>
<dbReference type="GO" id="GO:0052170">
    <property type="term" value="P:symbiont-mediated suppression of host innate immune response"/>
    <property type="evidence" value="ECO:0007669"/>
    <property type="project" value="UniProtKB-KW"/>
</dbReference>
<dbReference type="GO" id="GO:0019058">
    <property type="term" value="P:viral life cycle"/>
    <property type="evidence" value="ECO:0007669"/>
    <property type="project" value="InterPro"/>
</dbReference>
<dbReference type="Gene3D" id="1.20.5.4730">
    <property type="match status" value="1"/>
</dbReference>
<dbReference type="InterPro" id="IPR053711">
    <property type="entry name" value="Lentiviral_Vpx_assoc_factor"/>
</dbReference>
<dbReference type="InterPro" id="IPR000012">
    <property type="entry name" value="RetroV_VpR/X"/>
</dbReference>
<dbReference type="Pfam" id="PF00522">
    <property type="entry name" value="VPR"/>
    <property type="match status" value="1"/>
</dbReference>
<dbReference type="PRINTS" id="PR00444">
    <property type="entry name" value="HIVVPRVPX"/>
</dbReference>
<accession>Q02842</accession>
<sequence>MASGRDPREPLPGWLEIWDLDREPWDEWLQDMLRDLNEEARRHFGMNMLIRVWNYCVEEGRRHNTPWNEIGYKYYRIVQKSMFVHFRCGCRRRGPFSPYEERRNGQGGGAPPPPPGLA</sequence>
<organism>
    <name type="scientific">Simian immunodeficiency virus agm.grivet (isolate AGM gr-1)</name>
    <name type="common">SIV-agm.gri</name>
    <name type="synonym">Simian immunodeficiency virus African green monkey grivet</name>
    <dbReference type="NCBI Taxonomy" id="31684"/>
    <lineage>
        <taxon>Viruses</taxon>
        <taxon>Riboviria</taxon>
        <taxon>Pararnavirae</taxon>
        <taxon>Artverviricota</taxon>
        <taxon>Revtraviricetes</taxon>
        <taxon>Ortervirales</taxon>
        <taxon>Retroviridae</taxon>
        <taxon>Orthoretrovirinae</taxon>
        <taxon>Lentivirus</taxon>
        <taxon>Simian immunodeficiency virus</taxon>
    </lineage>
</organism>
<proteinExistence type="inferred from homology"/>
<keyword id="KW-1048">Host nucleus</keyword>
<keyword id="KW-0945">Host-virus interaction</keyword>
<keyword id="KW-1090">Inhibition of host innate immune response by virus</keyword>
<keyword id="KW-0899">Viral immunoevasion</keyword>
<keyword id="KW-0946">Virion</keyword>